<protein>
    <recommendedName>
        <fullName evidence="1">ATP synthase subunit b</fullName>
    </recommendedName>
    <alternativeName>
        <fullName evidence="1">ATP synthase F(0) sector subunit b</fullName>
    </alternativeName>
    <alternativeName>
        <fullName evidence="1">ATPase subunit I</fullName>
    </alternativeName>
    <alternativeName>
        <fullName evidence="1">F-type ATPase subunit b</fullName>
        <shortName evidence="1">F-ATPase subunit b</shortName>
    </alternativeName>
</protein>
<evidence type="ECO:0000255" key="1">
    <source>
        <dbReference type="HAMAP-Rule" id="MF_01398"/>
    </source>
</evidence>
<gene>
    <name evidence="1" type="primary">atpF</name>
    <name type="ordered locus">Cthe_2604</name>
</gene>
<comment type="function">
    <text evidence="1">F(1)F(0) ATP synthase produces ATP from ADP in the presence of a proton or sodium gradient. F-type ATPases consist of two structural domains, F(1) containing the extramembraneous catalytic core and F(0) containing the membrane proton channel, linked together by a central stalk and a peripheral stalk. During catalysis, ATP synthesis in the catalytic domain of F(1) is coupled via a rotary mechanism of the central stalk subunits to proton translocation.</text>
</comment>
<comment type="function">
    <text evidence="1">Component of the F(0) channel, it forms part of the peripheral stalk, linking F(1) to F(0).</text>
</comment>
<comment type="subunit">
    <text evidence="1">F-type ATPases have 2 components, F(1) - the catalytic core - and F(0) - the membrane proton channel. F(1) has five subunits: alpha(3), beta(3), gamma(1), delta(1), epsilon(1). F(0) has three main subunits: a(1), b(2) and c(10-14). The alpha and beta chains form an alternating ring which encloses part of the gamma chain. F(1) is attached to F(0) by a central stalk formed by the gamma and epsilon chains, while a peripheral stalk is formed by the delta and b chains.</text>
</comment>
<comment type="subcellular location">
    <subcellularLocation>
        <location evidence="1">Cell membrane</location>
        <topology evidence="1">Single-pass membrane protein</topology>
    </subcellularLocation>
</comment>
<comment type="similarity">
    <text evidence="1">Belongs to the ATPase B chain family.</text>
</comment>
<reference key="1">
    <citation type="submission" date="2007-02" db="EMBL/GenBank/DDBJ databases">
        <title>Complete sequence of Clostridium thermocellum ATCC 27405.</title>
        <authorList>
            <consortium name="US DOE Joint Genome Institute"/>
            <person name="Copeland A."/>
            <person name="Lucas S."/>
            <person name="Lapidus A."/>
            <person name="Barry K."/>
            <person name="Detter J.C."/>
            <person name="Glavina del Rio T."/>
            <person name="Hammon N."/>
            <person name="Israni S."/>
            <person name="Dalin E."/>
            <person name="Tice H."/>
            <person name="Pitluck S."/>
            <person name="Chertkov O."/>
            <person name="Brettin T."/>
            <person name="Bruce D."/>
            <person name="Han C."/>
            <person name="Tapia R."/>
            <person name="Gilna P."/>
            <person name="Schmutz J."/>
            <person name="Larimer F."/>
            <person name="Land M."/>
            <person name="Hauser L."/>
            <person name="Kyrpides N."/>
            <person name="Mikhailova N."/>
            <person name="Wu J.H.D."/>
            <person name="Newcomb M."/>
            <person name="Richardson P."/>
        </authorList>
    </citation>
    <scope>NUCLEOTIDE SEQUENCE [LARGE SCALE GENOMIC DNA]</scope>
    <source>
        <strain>ATCC 27405 / DSM 1237 / JCM 9322 / NBRC 103400 / NCIMB 10682 / NRRL B-4536 / VPI 7372</strain>
    </source>
</reference>
<accession>A3DIM5</accession>
<proteinExistence type="inferred from homology"/>
<name>ATPF_ACET2</name>
<feature type="chain" id="PRO_0000368434" description="ATP synthase subunit b">
    <location>
        <begin position="1"/>
        <end position="181"/>
    </location>
</feature>
<feature type="transmembrane region" description="Helical" evidence="1">
    <location>
        <begin position="23"/>
        <end position="43"/>
    </location>
</feature>
<dbReference type="EMBL" id="CP000568">
    <property type="protein sequence ID" value="ABN53804.1"/>
    <property type="molecule type" value="Genomic_DNA"/>
</dbReference>
<dbReference type="RefSeq" id="WP_003512967.1">
    <property type="nucleotide sequence ID" value="NC_009012.1"/>
</dbReference>
<dbReference type="SMR" id="A3DIM5"/>
<dbReference type="STRING" id="203119.Cthe_2604"/>
<dbReference type="GeneID" id="35804730"/>
<dbReference type="KEGG" id="cth:Cthe_2604"/>
<dbReference type="eggNOG" id="COG0711">
    <property type="taxonomic scope" value="Bacteria"/>
</dbReference>
<dbReference type="HOGENOM" id="CLU_079215_4_0_9"/>
<dbReference type="OrthoDB" id="9795863at2"/>
<dbReference type="Proteomes" id="UP000002145">
    <property type="component" value="Chromosome"/>
</dbReference>
<dbReference type="GO" id="GO:0005886">
    <property type="term" value="C:plasma membrane"/>
    <property type="evidence" value="ECO:0007669"/>
    <property type="project" value="UniProtKB-SubCell"/>
</dbReference>
<dbReference type="GO" id="GO:0045259">
    <property type="term" value="C:proton-transporting ATP synthase complex"/>
    <property type="evidence" value="ECO:0007669"/>
    <property type="project" value="UniProtKB-KW"/>
</dbReference>
<dbReference type="GO" id="GO:0046933">
    <property type="term" value="F:proton-transporting ATP synthase activity, rotational mechanism"/>
    <property type="evidence" value="ECO:0007669"/>
    <property type="project" value="UniProtKB-UniRule"/>
</dbReference>
<dbReference type="GO" id="GO:0046961">
    <property type="term" value="F:proton-transporting ATPase activity, rotational mechanism"/>
    <property type="evidence" value="ECO:0007669"/>
    <property type="project" value="TreeGrafter"/>
</dbReference>
<dbReference type="CDD" id="cd06503">
    <property type="entry name" value="ATP-synt_Fo_b"/>
    <property type="match status" value="1"/>
</dbReference>
<dbReference type="Gene3D" id="6.10.250.1580">
    <property type="match status" value="1"/>
</dbReference>
<dbReference type="HAMAP" id="MF_01398">
    <property type="entry name" value="ATP_synth_b_bprime"/>
    <property type="match status" value="1"/>
</dbReference>
<dbReference type="InterPro" id="IPR028987">
    <property type="entry name" value="ATP_synth_B-like_membr_sf"/>
</dbReference>
<dbReference type="InterPro" id="IPR002146">
    <property type="entry name" value="ATP_synth_b/b'su_bac/chlpt"/>
</dbReference>
<dbReference type="InterPro" id="IPR005864">
    <property type="entry name" value="ATP_synth_F0_bsu_bac"/>
</dbReference>
<dbReference type="InterPro" id="IPR050059">
    <property type="entry name" value="ATP_synthase_B_chain"/>
</dbReference>
<dbReference type="NCBIfam" id="TIGR01144">
    <property type="entry name" value="ATP_synt_b"/>
    <property type="match status" value="1"/>
</dbReference>
<dbReference type="PANTHER" id="PTHR33445">
    <property type="entry name" value="ATP SYNTHASE SUBUNIT B', CHLOROPLASTIC"/>
    <property type="match status" value="1"/>
</dbReference>
<dbReference type="PANTHER" id="PTHR33445:SF2">
    <property type="entry name" value="ATP SYNTHASE SUBUNIT B', CHLOROPLASTIC"/>
    <property type="match status" value="1"/>
</dbReference>
<dbReference type="Pfam" id="PF00430">
    <property type="entry name" value="ATP-synt_B"/>
    <property type="match status" value="1"/>
</dbReference>
<dbReference type="SUPFAM" id="SSF81573">
    <property type="entry name" value="F1F0 ATP synthase subunit B, membrane domain"/>
    <property type="match status" value="1"/>
</dbReference>
<keyword id="KW-0066">ATP synthesis</keyword>
<keyword id="KW-1003">Cell membrane</keyword>
<keyword id="KW-0138">CF(0)</keyword>
<keyword id="KW-0375">Hydrogen ion transport</keyword>
<keyword id="KW-0406">Ion transport</keyword>
<keyword id="KW-0472">Membrane</keyword>
<keyword id="KW-1185">Reference proteome</keyword>
<keyword id="KW-0812">Transmembrane</keyword>
<keyword id="KW-1133">Transmembrane helix</keyword>
<keyword id="KW-0813">Transport</keyword>
<organism>
    <name type="scientific">Acetivibrio thermocellus (strain ATCC 27405 / DSM 1237 / JCM 9322 / NBRC 103400 / NCIMB 10682 / NRRL B-4536 / VPI 7372)</name>
    <name type="common">Clostridium thermocellum</name>
    <dbReference type="NCBI Taxonomy" id="203119"/>
    <lineage>
        <taxon>Bacteria</taxon>
        <taxon>Bacillati</taxon>
        <taxon>Bacillota</taxon>
        <taxon>Clostridia</taxon>
        <taxon>Eubacteriales</taxon>
        <taxon>Oscillospiraceae</taxon>
        <taxon>Acetivibrio</taxon>
    </lineage>
</organism>
<sequence>MLQENFVSCSKEREVQLAVLSEFIHIPTFIYTALNLVILYFILKRLLFKPVWEFMENRKNSIAESMEKAEKGKAEALELKNKYESELNEAYAKAQKILKEAEEKAKQEYERIIRDAKNEAEALKLKAKEEIEREKNEALKEIRNEVVSLALEAASKVLEANMDTEENRKLVNRFIDEQGVA</sequence>